<dbReference type="EMBL" id="CP003218">
    <property type="protein sequence ID" value="AEX04443.1"/>
    <property type="molecule type" value="Genomic_DNA"/>
</dbReference>
<dbReference type="SMR" id="A0A0H3H7Y9"/>
<dbReference type="KEGG" id="kox:KOX_13595"/>
<dbReference type="HOGENOM" id="CLU_093850_0_0_6"/>
<dbReference type="Proteomes" id="UP000007843">
    <property type="component" value="Chromosome"/>
</dbReference>
<dbReference type="GO" id="GO:0005886">
    <property type="term" value="C:plasma membrane"/>
    <property type="evidence" value="ECO:0007669"/>
    <property type="project" value="UniProtKB-SubCell"/>
</dbReference>
<dbReference type="GO" id="GO:0015627">
    <property type="term" value="C:type II protein secretion system complex"/>
    <property type="evidence" value="ECO:0007669"/>
    <property type="project" value="InterPro"/>
</dbReference>
<dbReference type="GO" id="GO:0015628">
    <property type="term" value="P:protein secretion by the type II secretion system"/>
    <property type="evidence" value="ECO:0007669"/>
    <property type="project" value="InterPro"/>
</dbReference>
<dbReference type="Gene3D" id="3.10.610.10">
    <property type="entry name" value="GSPII I/J protein-like"/>
    <property type="match status" value="1"/>
</dbReference>
<dbReference type="Gene3D" id="2.10.70.20">
    <property type="entry name" value="gspk-gspi-gspj complex like domains"/>
    <property type="match status" value="1"/>
</dbReference>
<dbReference type="InterPro" id="IPR012902">
    <property type="entry name" value="N_methyl_site"/>
</dbReference>
<dbReference type="InterPro" id="IPR045584">
    <property type="entry name" value="Pilin-like"/>
</dbReference>
<dbReference type="InterPro" id="IPR010055">
    <property type="entry name" value="T2SS_protein-GspJ"/>
</dbReference>
<dbReference type="InterPro" id="IPR051621">
    <property type="entry name" value="T2SS_protein_J"/>
</dbReference>
<dbReference type="NCBIfam" id="TIGR01711">
    <property type="entry name" value="gspJ"/>
    <property type="match status" value="1"/>
</dbReference>
<dbReference type="NCBIfam" id="TIGR02532">
    <property type="entry name" value="IV_pilin_GFxxxE"/>
    <property type="match status" value="1"/>
</dbReference>
<dbReference type="PANTHER" id="PTHR39583:SF2">
    <property type="entry name" value="TYPE II SECRETION SYSTEM PROTEIN J"/>
    <property type="match status" value="1"/>
</dbReference>
<dbReference type="PANTHER" id="PTHR39583">
    <property type="entry name" value="TYPE II SECRETION SYSTEM PROTEIN J-RELATED"/>
    <property type="match status" value="1"/>
</dbReference>
<dbReference type="Pfam" id="PF07963">
    <property type="entry name" value="N_methyl"/>
    <property type="match status" value="1"/>
</dbReference>
<dbReference type="Pfam" id="PF11612">
    <property type="entry name" value="T2SSJ"/>
    <property type="match status" value="1"/>
</dbReference>
<dbReference type="SUPFAM" id="SSF54523">
    <property type="entry name" value="Pili subunits"/>
    <property type="match status" value="1"/>
</dbReference>
<dbReference type="PROSITE" id="PS00409">
    <property type="entry name" value="PROKAR_NTER_METHYL"/>
    <property type="match status" value="1"/>
</dbReference>
<sequence>MSRCRERGFTLLEMLLALAIFAALSLSAFQILQGVMRNDEMAQRQVQRLTELQRAFVYLEGDFGQIIPRPPRGDERLFYAARYQRQSADWSISFMRNGWQNPMGILPRSELQRVGYRLRHQQLERLSYVHTDPQAGEEPIVKVLLKDVSAFRLRFFANGMWRDSWNDTTRLPEGIEVSLVVADVGEVSRLFFVTTGEQA</sequence>
<accession>A0A0H3H7Y9</accession>
<keyword id="KW-0997">Cell inner membrane</keyword>
<keyword id="KW-1003">Cell membrane</keyword>
<keyword id="KW-0472">Membrane</keyword>
<keyword id="KW-0488">Methylation</keyword>
<keyword id="KW-0812">Transmembrane</keyword>
<keyword id="KW-1133">Transmembrane helix</keyword>
<organism>
    <name type="scientific">Klebsiella michiganensis (strain ATCC 8724 / DSM 4798 / JCM 20051 / NBRC 3318 / NRRL B-199 / KCTC 1686 / BUCSAV 143 / CCM 1901)</name>
    <dbReference type="NCBI Taxonomy" id="1006551"/>
    <lineage>
        <taxon>Bacteria</taxon>
        <taxon>Pseudomonadati</taxon>
        <taxon>Pseudomonadota</taxon>
        <taxon>Gammaproteobacteria</taxon>
        <taxon>Enterobacterales</taxon>
        <taxon>Enterobacteriaceae</taxon>
        <taxon>Klebsiella/Raoultella group</taxon>
        <taxon>Klebsiella</taxon>
    </lineage>
</organism>
<reference key="1">
    <citation type="journal article" date="2012" name="J. Bacteriol.">
        <title>Complete genome sequence of Klebsiella oxytoca KCTC 1686, used in production of 2,3-butanediol.</title>
        <authorList>
            <person name="Shin S.H."/>
            <person name="Kim S."/>
            <person name="Kim J.Y."/>
            <person name="Lee S."/>
            <person name="Um Y."/>
            <person name="Oh M.K."/>
            <person name="Kim Y.R."/>
            <person name="Lee J."/>
            <person name="Yang K.S."/>
        </authorList>
    </citation>
    <scope>NUCLEOTIDE SEQUENCE [LARGE SCALE GENOMIC DNA]</scope>
    <source>
        <strain>ATCC 8724 / DSM 4798 / JCM 20051 / NBRC 3318 / NRRL B-199 / KCTC 1686 / BUCSAV 143 / CCM 1901</strain>
    </source>
</reference>
<reference key="2">
    <citation type="journal article" date="2012" name="EMBO J.">
        <title>Minor pseudopilin self-assembly primes type II secretion pseudopilus elongation.</title>
        <authorList>
            <person name="Cisneros D.A."/>
            <person name="Bond P.J."/>
            <person name="Pugsley A.P."/>
            <person name="Campos M."/>
            <person name="Francetic O."/>
        </authorList>
    </citation>
    <scope>FUNCTION</scope>
    <scope>INTERACTION WITH PULJ AND PULH</scope>
    <scope>DISRUPTION PHENOTYPE</scope>
    <scope>SUBCELLULAR LOCATION</scope>
</reference>
<protein>
    <recommendedName>
        <fullName>Type II secretion system protein J</fullName>
        <shortName>T2SS protein J</shortName>
    </recommendedName>
</protein>
<evidence type="ECO:0000250" key="1">
    <source>
        <dbReference type="UniProtKB" id="Q00517"/>
    </source>
</evidence>
<evidence type="ECO:0000255" key="2"/>
<evidence type="ECO:0000255" key="3">
    <source>
        <dbReference type="PROSITE-ProRule" id="PRU01070"/>
    </source>
</evidence>
<evidence type="ECO:0000269" key="4">
    <source>
    </source>
</evidence>
<evidence type="ECO:0000305" key="5"/>
<gene>
    <name type="primary">pulJ</name>
    <name type="ordered locus">KOX_13595</name>
</gene>
<name>GSPJ_KLEM8</name>
<proteinExistence type="evidence at protein level"/>
<comment type="function">
    <text evidence="1">Component of the type II secretion system required for the energy-dependent secretion of extracellular factors such as proteases and toxins from the periplasm. Part of the pseudopilus tip complex that is critical for the recognition and binding of secretion substrates.</text>
</comment>
<comment type="subunit">
    <text evidence="1">Type II secretion is composed of four main components: the outer membrane complex, the inner membrane complex, the cytoplasmic secretion ATPase and the periplasm-spanning pseudopilus. Interacts with core component PulG.</text>
</comment>
<comment type="subcellular location">
    <subcellularLocation>
        <location evidence="4">Cell inner membrane</location>
        <topology evidence="2">Single-pass membrane protein</topology>
    </subcellularLocation>
</comment>
<comment type="PTM">
    <text evidence="1">Cleaved by prepilin peptidase.</text>
</comment>
<comment type="PTM">
    <text evidence="1">Methylated by prepilin peptidase at the amino group of the N-terminal phenylalanine once the leader sequence is cleaved by prepilin peptidase.</text>
</comment>
<comment type="disruption phenotype">
    <text evidence="4">Deletion mutant shows longer pili but their number is reduced.</text>
</comment>
<comment type="similarity">
    <text evidence="5">Belongs to the GSP J family.</text>
</comment>
<feature type="propeptide" id="PRO_0000449551" description="Leader sequence" evidence="3">
    <location>
        <begin position="1"/>
        <end position="8"/>
    </location>
</feature>
<feature type="chain" id="PRO_0000449552" description="Type II secretion system protein J">
    <location>
        <begin position="9"/>
        <end position="199"/>
    </location>
</feature>
<feature type="transmembrane region" description="Helical" evidence="2">
    <location>
        <begin position="9"/>
        <end position="29"/>
    </location>
</feature>
<feature type="modified residue" description="N-methylphenylalanine" evidence="1">
    <location>
        <position position="9"/>
    </location>
</feature>